<proteinExistence type="inferred from homology"/>
<name>SELA_ECO57</name>
<evidence type="ECO:0000255" key="1">
    <source>
        <dbReference type="HAMAP-Rule" id="MF_00423"/>
    </source>
</evidence>
<protein>
    <recommendedName>
        <fullName evidence="1">L-seryl-tRNA(Sec) selenium transferase</fullName>
        <ecNumber evidence="1">2.9.1.1</ecNumber>
    </recommendedName>
    <alternativeName>
        <fullName evidence="1">Selenocysteine synthase</fullName>
        <shortName evidence="1">Sec synthase</shortName>
    </alternativeName>
    <alternativeName>
        <fullName evidence="1">Selenocysteinyl-tRNA(Sec) synthase</fullName>
    </alternativeName>
</protein>
<feature type="chain" id="PRO_0000189600" description="L-seryl-tRNA(Sec) selenium transferase">
    <location>
        <begin position="1"/>
        <end position="463"/>
    </location>
</feature>
<feature type="modified residue" description="N6-(pyridoxal phosphate)lysine" evidence="1">
    <location>
        <position position="295"/>
    </location>
</feature>
<keyword id="KW-0963">Cytoplasm</keyword>
<keyword id="KW-0648">Protein biosynthesis</keyword>
<keyword id="KW-0663">Pyridoxal phosphate</keyword>
<keyword id="KW-1185">Reference proteome</keyword>
<keyword id="KW-0711">Selenium</keyword>
<keyword id="KW-0808">Transferase</keyword>
<dbReference type="EC" id="2.9.1.1" evidence="1"/>
<dbReference type="EMBL" id="AE005174">
    <property type="protein sequence ID" value="AAG58735.1"/>
    <property type="molecule type" value="Genomic_DNA"/>
</dbReference>
<dbReference type="EMBL" id="BA000007">
    <property type="protein sequence ID" value="BAB37891.1"/>
    <property type="molecule type" value="Genomic_DNA"/>
</dbReference>
<dbReference type="PIR" id="C86034">
    <property type="entry name" value="C86034"/>
</dbReference>
<dbReference type="PIR" id="D91187">
    <property type="entry name" value="D91187"/>
</dbReference>
<dbReference type="RefSeq" id="NP_312495.1">
    <property type="nucleotide sequence ID" value="NC_002695.1"/>
</dbReference>
<dbReference type="RefSeq" id="WP_000206275.1">
    <property type="nucleotide sequence ID" value="NZ_VOAI01000004.1"/>
</dbReference>
<dbReference type="SMR" id="P0A822"/>
<dbReference type="STRING" id="155864.Z5012"/>
<dbReference type="GeneID" id="75204641"/>
<dbReference type="GeneID" id="915592"/>
<dbReference type="KEGG" id="ece:Z5012"/>
<dbReference type="KEGG" id="ecs:ECs_4468"/>
<dbReference type="PATRIC" id="fig|386585.9.peg.4679"/>
<dbReference type="eggNOG" id="COG1921">
    <property type="taxonomic scope" value="Bacteria"/>
</dbReference>
<dbReference type="HOGENOM" id="CLU_038142_1_0_6"/>
<dbReference type="OMA" id="GATNRTH"/>
<dbReference type="UniPathway" id="UPA00906">
    <property type="reaction ID" value="UER00896"/>
</dbReference>
<dbReference type="Proteomes" id="UP000000558">
    <property type="component" value="Chromosome"/>
</dbReference>
<dbReference type="Proteomes" id="UP000002519">
    <property type="component" value="Chromosome"/>
</dbReference>
<dbReference type="GO" id="GO:0005737">
    <property type="term" value="C:cytoplasm"/>
    <property type="evidence" value="ECO:0007669"/>
    <property type="project" value="UniProtKB-SubCell"/>
</dbReference>
<dbReference type="GO" id="GO:0004125">
    <property type="term" value="F:L-seryl-tRNA(Sec) selenium transferase activity"/>
    <property type="evidence" value="ECO:0007669"/>
    <property type="project" value="UniProtKB-UniRule"/>
</dbReference>
<dbReference type="GO" id="GO:0001717">
    <property type="term" value="P:conversion of seryl-tRNAsec to selenocys-tRNAsec"/>
    <property type="evidence" value="ECO:0007669"/>
    <property type="project" value="UniProtKB-UniRule"/>
</dbReference>
<dbReference type="GO" id="GO:0001514">
    <property type="term" value="P:selenocysteine incorporation"/>
    <property type="evidence" value="ECO:0007669"/>
    <property type="project" value="UniProtKB-UniRule"/>
</dbReference>
<dbReference type="FunFam" id="3.40.640.10:FF:000028">
    <property type="entry name" value="L-seryl-tRNA(Sec) selenium transferase"/>
    <property type="match status" value="1"/>
</dbReference>
<dbReference type="FunFam" id="3.90.1150.180:FF:000001">
    <property type="entry name" value="L-seryl-tRNA(Sec) selenium transferase"/>
    <property type="match status" value="1"/>
</dbReference>
<dbReference type="Gene3D" id="3.90.1150.180">
    <property type="match status" value="1"/>
</dbReference>
<dbReference type="Gene3D" id="3.40.640.10">
    <property type="entry name" value="Type I PLP-dependent aspartate aminotransferase-like (Major domain)"/>
    <property type="match status" value="1"/>
</dbReference>
<dbReference type="HAMAP" id="MF_00423">
    <property type="entry name" value="SelA"/>
    <property type="match status" value="1"/>
</dbReference>
<dbReference type="InterPro" id="IPR015424">
    <property type="entry name" value="PyrdxlP-dep_Trfase"/>
</dbReference>
<dbReference type="InterPro" id="IPR015421">
    <property type="entry name" value="PyrdxlP-dep_Trfase_major"/>
</dbReference>
<dbReference type="InterPro" id="IPR018319">
    <property type="entry name" value="SelA-like"/>
</dbReference>
<dbReference type="InterPro" id="IPR004534">
    <property type="entry name" value="SelA_trans"/>
</dbReference>
<dbReference type="InterPro" id="IPR025862">
    <property type="entry name" value="SelA_trans_N_dom"/>
</dbReference>
<dbReference type="NCBIfam" id="TIGR00474">
    <property type="entry name" value="selA"/>
    <property type="match status" value="1"/>
</dbReference>
<dbReference type="PANTHER" id="PTHR32328">
    <property type="entry name" value="L-SERYL-TRNA(SEC) SELENIUM TRANSFERASE"/>
    <property type="match status" value="1"/>
</dbReference>
<dbReference type="PANTHER" id="PTHR32328:SF0">
    <property type="entry name" value="L-SERYL-TRNA(SEC) SELENIUM TRANSFERASE"/>
    <property type="match status" value="1"/>
</dbReference>
<dbReference type="Pfam" id="PF12390">
    <property type="entry name" value="Se-cys_synth_N"/>
    <property type="match status" value="1"/>
</dbReference>
<dbReference type="Pfam" id="PF03841">
    <property type="entry name" value="SelA"/>
    <property type="match status" value="1"/>
</dbReference>
<dbReference type="SUPFAM" id="SSF53383">
    <property type="entry name" value="PLP-dependent transferases"/>
    <property type="match status" value="1"/>
</dbReference>
<sequence length="463" mass="50607">MTTETRSLYSQLPAIDRLLRDSSFLSLRDTYGHTRVVELLRQMLDEAREVIRGSQTLPAWCENWAQEVDARLTKEAQSALRPVINLTGTVLHTNLGRALQAEAAVEAVAQAMRSPVTLEYDLDDAGRGHRDRALAQLLCRITGAEDACIVNNNAAAVLLMLAATASGKEVVVSRGELVEIGGAFRIPDVMRQAGCTLHEVGTTNRTHANDYRQAVNENTALLMKVHTSNYSIQGFTKAIDEAELVALGKELDVPVVTDLGSGSLVDLSQYGLPKEPMPQELIAAGVSLVSFSGDKLLGGPQAGIIVGKKEMIARLQSHPLKRALRADKMTLAALEATLRLYLHPEALSEKLPTLRLLTRSAEVIQIQAQRLQAPLAAHYGAEFAVQVMPCLSQIGSGSLPVDRLPSAALTFTPHDGRGSHLESLAARWRELPVPVIGRIYDGRLWLDLRCLEDEQRFLEMLLK</sequence>
<accession>P0A822</accession>
<accession>P23328</accession>
<accession>P58225</accession>
<accession>P78119</accession>
<comment type="function">
    <text evidence="1">Converts seryl-tRNA(Sec) to selenocysteinyl-tRNA(Sec) required for selenoprotein biosynthesis.</text>
</comment>
<comment type="catalytic activity">
    <reaction evidence="1">
        <text>L-seryl-tRNA(Sec) + selenophosphate + H(+) = L-selenocysteinyl-tRNA(Sec) + phosphate</text>
        <dbReference type="Rhea" id="RHEA:22728"/>
        <dbReference type="Rhea" id="RHEA-COMP:9742"/>
        <dbReference type="Rhea" id="RHEA-COMP:9743"/>
        <dbReference type="ChEBI" id="CHEBI:15378"/>
        <dbReference type="ChEBI" id="CHEBI:16144"/>
        <dbReference type="ChEBI" id="CHEBI:43474"/>
        <dbReference type="ChEBI" id="CHEBI:78533"/>
        <dbReference type="ChEBI" id="CHEBI:78573"/>
        <dbReference type="EC" id="2.9.1.1"/>
    </reaction>
</comment>
<comment type="cofactor">
    <cofactor evidence="1">
        <name>pyridoxal 5'-phosphate</name>
        <dbReference type="ChEBI" id="CHEBI:597326"/>
    </cofactor>
</comment>
<comment type="pathway">
    <text evidence="1">Aminoacyl-tRNA biosynthesis; selenocysteinyl-tRNA(Sec) biosynthesis; selenocysteinyl-tRNA(Sec) from L-seryl-tRNA(Sec) (bacterial route): step 1/1.</text>
</comment>
<comment type="subunit">
    <text evidence="1">Homodecamer; pentamer of dimers. Binds only one seryl-tRNA(Sec) per dimer.</text>
</comment>
<comment type="subcellular location">
    <subcellularLocation>
        <location evidence="1">Cytoplasm</location>
    </subcellularLocation>
</comment>
<comment type="similarity">
    <text evidence="1">Belongs to the SelA family.</text>
</comment>
<organism>
    <name type="scientific">Escherichia coli O157:H7</name>
    <dbReference type="NCBI Taxonomy" id="83334"/>
    <lineage>
        <taxon>Bacteria</taxon>
        <taxon>Pseudomonadati</taxon>
        <taxon>Pseudomonadota</taxon>
        <taxon>Gammaproteobacteria</taxon>
        <taxon>Enterobacterales</taxon>
        <taxon>Enterobacteriaceae</taxon>
        <taxon>Escherichia</taxon>
    </lineage>
</organism>
<reference key="1">
    <citation type="journal article" date="2001" name="Nature">
        <title>Genome sequence of enterohaemorrhagic Escherichia coli O157:H7.</title>
        <authorList>
            <person name="Perna N.T."/>
            <person name="Plunkett G. III"/>
            <person name="Burland V."/>
            <person name="Mau B."/>
            <person name="Glasner J.D."/>
            <person name="Rose D.J."/>
            <person name="Mayhew G.F."/>
            <person name="Evans P.S."/>
            <person name="Gregor J."/>
            <person name="Kirkpatrick H.A."/>
            <person name="Posfai G."/>
            <person name="Hackett J."/>
            <person name="Klink S."/>
            <person name="Boutin A."/>
            <person name="Shao Y."/>
            <person name="Miller L."/>
            <person name="Grotbeck E.J."/>
            <person name="Davis N.W."/>
            <person name="Lim A."/>
            <person name="Dimalanta E.T."/>
            <person name="Potamousis K."/>
            <person name="Apodaca J."/>
            <person name="Anantharaman T.S."/>
            <person name="Lin J."/>
            <person name="Yen G."/>
            <person name="Schwartz D.C."/>
            <person name="Welch R.A."/>
            <person name="Blattner F.R."/>
        </authorList>
    </citation>
    <scope>NUCLEOTIDE SEQUENCE [LARGE SCALE GENOMIC DNA]</scope>
    <source>
        <strain>O157:H7 / EDL933 / ATCC 700927 / EHEC</strain>
    </source>
</reference>
<reference key="2">
    <citation type="journal article" date="2001" name="DNA Res.">
        <title>Complete genome sequence of enterohemorrhagic Escherichia coli O157:H7 and genomic comparison with a laboratory strain K-12.</title>
        <authorList>
            <person name="Hayashi T."/>
            <person name="Makino K."/>
            <person name="Ohnishi M."/>
            <person name="Kurokawa K."/>
            <person name="Ishii K."/>
            <person name="Yokoyama K."/>
            <person name="Han C.-G."/>
            <person name="Ohtsubo E."/>
            <person name="Nakayama K."/>
            <person name="Murata T."/>
            <person name="Tanaka M."/>
            <person name="Tobe T."/>
            <person name="Iida T."/>
            <person name="Takami H."/>
            <person name="Honda T."/>
            <person name="Sasakawa C."/>
            <person name="Ogasawara N."/>
            <person name="Yasunaga T."/>
            <person name="Kuhara S."/>
            <person name="Shiba T."/>
            <person name="Hattori M."/>
            <person name="Shinagawa H."/>
        </authorList>
    </citation>
    <scope>NUCLEOTIDE SEQUENCE [LARGE SCALE GENOMIC DNA]</scope>
    <source>
        <strain>O157:H7 / Sakai / RIMD 0509952 / EHEC</strain>
    </source>
</reference>
<gene>
    <name evidence="1" type="primary">selA</name>
    <name type="ordered locus">Z5012</name>
    <name type="ordered locus">ECs4468</name>
</gene>